<comment type="function">
    <text evidence="1">Catalyzes the initial step of the lipid cycle reactions in the biosynthesis of the cell wall peptidoglycan: transfers peptidoglycan precursor phospho-MurNAc-pentapeptide from UDP-MurNAc-pentapeptide onto the lipid carrier undecaprenyl phosphate, yielding undecaprenyl-pyrophosphoryl-MurNAc-pentapeptide, known as lipid I.</text>
</comment>
<comment type="catalytic activity">
    <reaction evidence="1">
        <text>UDP-N-acetyl-alpha-D-muramoyl-L-alanyl-gamma-D-glutamyl-meso-2,6-diaminopimeloyl-D-alanyl-D-alanine + di-trans,octa-cis-undecaprenyl phosphate = di-trans,octa-cis-undecaprenyl diphospho-N-acetyl-alpha-D-muramoyl-L-alanyl-D-glutamyl-meso-2,6-diaminopimeloyl-D-alanyl-D-alanine + UMP</text>
        <dbReference type="Rhea" id="RHEA:28386"/>
        <dbReference type="ChEBI" id="CHEBI:57865"/>
        <dbReference type="ChEBI" id="CHEBI:60392"/>
        <dbReference type="ChEBI" id="CHEBI:61386"/>
        <dbReference type="ChEBI" id="CHEBI:61387"/>
        <dbReference type="EC" id="2.7.8.13"/>
    </reaction>
</comment>
<comment type="cofactor">
    <cofactor evidence="1">
        <name>Mg(2+)</name>
        <dbReference type="ChEBI" id="CHEBI:18420"/>
    </cofactor>
</comment>
<comment type="pathway">
    <text evidence="1">Cell wall biogenesis; peptidoglycan biosynthesis.</text>
</comment>
<comment type="subcellular location">
    <subcellularLocation>
        <location evidence="1">Cell inner membrane</location>
        <topology evidence="1">Multi-pass membrane protein</topology>
    </subcellularLocation>
</comment>
<comment type="similarity">
    <text evidence="1">Belongs to the glycosyltransferase 4 family. MraY subfamily.</text>
</comment>
<comment type="sequence caution" evidence="2">
    <conflict type="erroneous initiation">
        <sequence resource="EMBL-CDS" id="ABB75786"/>
    </conflict>
</comment>
<evidence type="ECO:0000255" key="1">
    <source>
        <dbReference type="HAMAP-Rule" id="MF_00038"/>
    </source>
</evidence>
<evidence type="ECO:0000305" key="2"/>
<reference key="1">
    <citation type="submission" date="2005-08" db="EMBL/GenBank/DDBJ databases">
        <title>Complete sequence of chromosome 1 of Nitrosospira multiformis ATCC 25196.</title>
        <authorList>
            <person name="Copeland A."/>
            <person name="Lucas S."/>
            <person name="Lapidus A."/>
            <person name="Barry K."/>
            <person name="Detter J.C."/>
            <person name="Glavina T."/>
            <person name="Hammon N."/>
            <person name="Israni S."/>
            <person name="Pitluck S."/>
            <person name="Chain P."/>
            <person name="Malfatti S."/>
            <person name="Shin M."/>
            <person name="Vergez L."/>
            <person name="Schmutz J."/>
            <person name="Larimer F."/>
            <person name="Land M."/>
            <person name="Hauser L."/>
            <person name="Kyrpides N."/>
            <person name="Lykidis A."/>
            <person name="Richardson P."/>
        </authorList>
    </citation>
    <scope>NUCLEOTIDE SEQUENCE [LARGE SCALE GENOMIC DNA]</scope>
    <source>
        <strain>ATCC 25196 / NCIMB 11849 / C 71</strain>
    </source>
</reference>
<dbReference type="EC" id="2.7.8.13" evidence="1"/>
<dbReference type="EMBL" id="CP000103">
    <property type="protein sequence ID" value="ABB75786.1"/>
    <property type="status" value="ALT_INIT"/>
    <property type="molecule type" value="Genomic_DNA"/>
</dbReference>
<dbReference type="RefSeq" id="WP_041352624.1">
    <property type="nucleotide sequence ID" value="NC_007614.1"/>
</dbReference>
<dbReference type="SMR" id="Q2Y635"/>
<dbReference type="STRING" id="323848.Nmul_A2497"/>
<dbReference type="KEGG" id="nmu:Nmul_A2497"/>
<dbReference type="eggNOG" id="COG0472">
    <property type="taxonomic scope" value="Bacteria"/>
</dbReference>
<dbReference type="HOGENOM" id="CLU_023982_0_0_4"/>
<dbReference type="OrthoDB" id="9805475at2"/>
<dbReference type="UniPathway" id="UPA00219"/>
<dbReference type="Proteomes" id="UP000002718">
    <property type="component" value="Chromosome"/>
</dbReference>
<dbReference type="GO" id="GO:0005886">
    <property type="term" value="C:plasma membrane"/>
    <property type="evidence" value="ECO:0007669"/>
    <property type="project" value="UniProtKB-SubCell"/>
</dbReference>
<dbReference type="GO" id="GO:0046872">
    <property type="term" value="F:metal ion binding"/>
    <property type="evidence" value="ECO:0007669"/>
    <property type="project" value="UniProtKB-KW"/>
</dbReference>
<dbReference type="GO" id="GO:0008963">
    <property type="term" value="F:phospho-N-acetylmuramoyl-pentapeptide-transferase activity"/>
    <property type="evidence" value="ECO:0007669"/>
    <property type="project" value="UniProtKB-UniRule"/>
</dbReference>
<dbReference type="GO" id="GO:0051992">
    <property type="term" value="F:UDP-N-acetylmuramoyl-L-alanyl-D-glutamyl-meso-2,6-diaminopimelyl-D-alanyl-D-alanine:undecaprenyl-phosphate transferase activity"/>
    <property type="evidence" value="ECO:0007669"/>
    <property type="project" value="RHEA"/>
</dbReference>
<dbReference type="GO" id="GO:0051301">
    <property type="term" value="P:cell division"/>
    <property type="evidence" value="ECO:0007669"/>
    <property type="project" value="UniProtKB-KW"/>
</dbReference>
<dbReference type="GO" id="GO:0071555">
    <property type="term" value="P:cell wall organization"/>
    <property type="evidence" value="ECO:0007669"/>
    <property type="project" value="UniProtKB-KW"/>
</dbReference>
<dbReference type="GO" id="GO:0009252">
    <property type="term" value="P:peptidoglycan biosynthetic process"/>
    <property type="evidence" value="ECO:0007669"/>
    <property type="project" value="UniProtKB-UniRule"/>
</dbReference>
<dbReference type="GO" id="GO:0008360">
    <property type="term" value="P:regulation of cell shape"/>
    <property type="evidence" value="ECO:0007669"/>
    <property type="project" value="UniProtKB-KW"/>
</dbReference>
<dbReference type="CDD" id="cd06852">
    <property type="entry name" value="GT_MraY"/>
    <property type="match status" value="1"/>
</dbReference>
<dbReference type="HAMAP" id="MF_00038">
    <property type="entry name" value="MraY"/>
    <property type="match status" value="1"/>
</dbReference>
<dbReference type="InterPro" id="IPR000715">
    <property type="entry name" value="Glycosyl_transferase_4"/>
</dbReference>
<dbReference type="InterPro" id="IPR003524">
    <property type="entry name" value="PNAcMuramoyl-5peptid_Trfase"/>
</dbReference>
<dbReference type="InterPro" id="IPR018480">
    <property type="entry name" value="PNAcMuramoyl-5peptid_Trfase_CS"/>
</dbReference>
<dbReference type="NCBIfam" id="TIGR00445">
    <property type="entry name" value="mraY"/>
    <property type="match status" value="1"/>
</dbReference>
<dbReference type="PANTHER" id="PTHR22926">
    <property type="entry name" value="PHOSPHO-N-ACETYLMURAMOYL-PENTAPEPTIDE-TRANSFERASE"/>
    <property type="match status" value="1"/>
</dbReference>
<dbReference type="PANTHER" id="PTHR22926:SF5">
    <property type="entry name" value="PHOSPHO-N-ACETYLMURAMOYL-PENTAPEPTIDE-TRANSFERASE HOMOLOG"/>
    <property type="match status" value="1"/>
</dbReference>
<dbReference type="Pfam" id="PF00953">
    <property type="entry name" value="Glycos_transf_4"/>
    <property type="match status" value="1"/>
</dbReference>
<dbReference type="Pfam" id="PF10555">
    <property type="entry name" value="MraY_sig1"/>
    <property type="match status" value="1"/>
</dbReference>
<dbReference type="PROSITE" id="PS01347">
    <property type="entry name" value="MRAY_1"/>
    <property type="match status" value="1"/>
</dbReference>
<dbReference type="PROSITE" id="PS01348">
    <property type="entry name" value="MRAY_2"/>
    <property type="match status" value="1"/>
</dbReference>
<organism>
    <name type="scientific">Nitrosospira multiformis (strain ATCC 25196 / NCIMB 11849 / C 71)</name>
    <dbReference type="NCBI Taxonomy" id="323848"/>
    <lineage>
        <taxon>Bacteria</taxon>
        <taxon>Pseudomonadati</taxon>
        <taxon>Pseudomonadota</taxon>
        <taxon>Betaproteobacteria</taxon>
        <taxon>Nitrosomonadales</taxon>
        <taxon>Nitrosomonadaceae</taxon>
        <taxon>Nitrosospira</taxon>
    </lineage>
</organism>
<sequence>MLLELAQWFAGDIRLLNVFSYITLRTVLAALTALIISFIVGPAMIRKLTAYKIGQAVRDDGPQTHLVKAGTPTMGGALILVSIAITTLLWADLSNRYVWIVLITTLGFGMIGWVDDYRKVVYRNPKGLSARAKLFWQSAIAILVALYLVLTAELPAQTTLIVPFFKQVAVPLGVTGFVALTYFVIVGTSNAVNLTDGLDGLAIMPTVMISSALAIFSYVAGHAVFAKYLGMPHIPQAGELAVFCGALAGAGLAFLWFNAYPAEVFMGDVGALALGAALGIVTVIVRQEIVMLIMGGVFVVETLSVMLQVASFKLIGKRIFRMAPLHHHYELKGWKENQVVVRFWIITMMLVLFGLSSLKLR</sequence>
<accession>Q2Y635</accession>
<name>MRAY_NITMU</name>
<proteinExistence type="inferred from homology"/>
<keyword id="KW-0131">Cell cycle</keyword>
<keyword id="KW-0132">Cell division</keyword>
<keyword id="KW-0997">Cell inner membrane</keyword>
<keyword id="KW-1003">Cell membrane</keyword>
<keyword id="KW-0133">Cell shape</keyword>
<keyword id="KW-0961">Cell wall biogenesis/degradation</keyword>
<keyword id="KW-0460">Magnesium</keyword>
<keyword id="KW-0472">Membrane</keyword>
<keyword id="KW-0479">Metal-binding</keyword>
<keyword id="KW-0573">Peptidoglycan synthesis</keyword>
<keyword id="KW-1185">Reference proteome</keyword>
<keyword id="KW-0808">Transferase</keyword>
<keyword id="KW-0812">Transmembrane</keyword>
<keyword id="KW-1133">Transmembrane helix</keyword>
<gene>
    <name evidence="1" type="primary">mraY</name>
    <name type="ordered locus">Nmul_A2497</name>
</gene>
<protein>
    <recommendedName>
        <fullName evidence="1">Phospho-N-acetylmuramoyl-pentapeptide-transferase</fullName>
        <ecNumber evidence="1">2.7.8.13</ecNumber>
    </recommendedName>
    <alternativeName>
        <fullName evidence="1">UDP-MurNAc-pentapeptide phosphotransferase</fullName>
    </alternativeName>
</protein>
<feature type="chain" id="PRO_0000235461" description="Phospho-N-acetylmuramoyl-pentapeptide-transferase">
    <location>
        <begin position="1"/>
        <end position="361"/>
    </location>
</feature>
<feature type="transmembrane region" description="Helical" evidence="1">
    <location>
        <begin position="25"/>
        <end position="45"/>
    </location>
</feature>
<feature type="transmembrane region" description="Helical" evidence="1">
    <location>
        <begin position="73"/>
        <end position="93"/>
    </location>
</feature>
<feature type="transmembrane region" description="Helical" evidence="1">
    <location>
        <begin position="97"/>
        <end position="117"/>
    </location>
</feature>
<feature type="transmembrane region" description="Helical" evidence="1">
    <location>
        <begin position="134"/>
        <end position="154"/>
    </location>
</feature>
<feature type="transmembrane region" description="Helical" evidence="1">
    <location>
        <begin position="168"/>
        <end position="188"/>
    </location>
</feature>
<feature type="transmembrane region" description="Helical" evidence="1">
    <location>
        <begin position="200"/>
        <end position="220"/>
    </location>
</feature>
<feature type="transmembrane region" description="Helical" evidence="1">
    <location>
        <begin position="237"/>
        <end position="257"/>
    </location>
</feature>
<feature type="transmembrane region" description="Helical" evidence="1">
    <location>
        <begin position="264"/>
        <end position="284"/>
    </location>
</feature>
<feature type="transmembrane region" description="Helical" evidence="1">
    <location>
        <begin position="289"/>
        <end position="309"/>
    </location>
</feature>
<feature type="transmembrane region" description="Helical" evidence="1">
    <location>
        <begin position="338"/>
        <end position="358"/>
    </location>
</feature>